<keyword id="KW-0143">Chaperone</keyword>
<keyword id="KW-0963">Cytoplasm</keyword>
<keyword id="KW-0235">DNA replication</keyword>
<keyword id="KW-0479">Metal-binding</keyword>
<keyword id="KW-0677">Repeat</keyword>
<keyword id="KW-0346">Stress response</keyword>
<keyword id="KW-0862">Zinc</keyword>
<keyword id="KW-0863">Zinc-finger</keyword>
<proteinExistence type="inferred from homology"/>
<evidence type="ECO:0000255" key="1">
    <source>
        <dbReference type="HAMAP-Rule" id="MF_01152"/>
    </source>
</evidence>
<sequence length="377" mass="41078">MKIDYYEALGVTRTADDKTLKAAFRKLAMQYHPDRNPDDPEAERKFKEIGEAYETLKDPQKRAAYDRFGHAAFENGGMGGGFGNGFGGAGGFADIFEDIFGEMMGGGRRRSNGGRERGADLRYNMEVTLEEAYAGKTAQIRVPTSITCDECSGSGAKPGSQPTTCTMCSGSGRVRAAQGFFSVERTCPGCNGRGQIIKDPCEKCHGQGRVTQERSLSVNIPAGIEDGTRIRLAGEGEAGLRGGPAGDLYIFLSVKPHEFFQRDGADLYCKVPISMTTAALGGQFEVSTLDGTQTRVKVPEGTQNGKQFRLKGKGMPVLRQSVTGDLYIQIDIETPQNLSKRQRELLEEFEKLSSQENSPKSAGFFSRMKEFFEGIGE</sequence>
<reference key="1">
    <citation type="submission" date="2007-12" db="EMBL/GenBank/DDBJ databases">
        <title>Brucella suis ATCC 23445 whole genome shotgun sequencing project.</title>
        <authorList>
            <person name="Setubal J.C."/>
            <person name="Bowns C."/>
            <person name="Boyle S."/>
            <person name="Crasta O.R."/>
            <person name="Czar M.J."/>
            <person name="Dharmanolla C."/>
            <person name="Gillespie J.J."/>
            <person name="Kenyon R.W."/>
            <person name="Lu J."/>
            <person name="Mane S."/>
            <person name="Mohapatra S."/>
            <person name="Nagrani S."/>
            <person name="Purkayastha A."/>
            <person name="Rajasimha H.K."/>
            <person name="Shallom J.M."/>
            <person name="Shallom S."/>
            <person name="Shukla M."/>
            <person name="Snyder E.E."/>
            <person name="Sobral B.W."/>
            <person name="Wattam A.R."/>
            <person name="Will R."/>
            <person name="Williams K."/>
            <person name="Yoo H."/>
            <person name="Bruce D."/>
            <person name="Detter C."/>
            <person name="Munk C."/>
            <person name="Brettin T.S."/>
        </authorList>
    </citation>
    <scope>NUCLEOTIDE SEQUENCE [LARGE SCALE GENOMIC DNA]</scope>
    <source>
        <strain>ATCC 23445 / NCTC 10510</strain>
    </source>
</reference>
<protein>
    <recommendedName>
        <fullName evidence="1">Chaperone protein DnaJ</fullName>
    </recommendedName>
</protein>
<name>DNAJ_BRUSI</name>
<feature type="chain" id="PRO_1000085152" description="Chaperone protein DnaJ">
    <location>
        <begin position="1"/>
        <end position="377"/>
    </location>
</feature>
<feature type="domain" description="J" evidence="1">
    <location>
        <begin position="4"/>
        <end position="69"/>
    </location>
</feature>
<feature type="repeat" description="CXXCXGXG motif">
    <location>
        <begin position="148"/>
        <end position="155"/>
    </location>
</feature>
<feature type="repeat" description="CXXCXGXG motif">
    <location>
        <begin position="165"/>
        <end position="172"/>
    </location>
</feature>
<feature type="repeat" description="CXXCXGXG motif">
    <location>
        <begin position="187"/>
        <end position="194"/>
    </location>
</feature>
<feature type="repeat" description="CXXCXGXG motif">
    <location>
        <begin position="201"/>
        <end position="208"/>
    </location>
</feature>
<feature type="zinc finger region" description="CR-type" evidence="1">
    <location>
        <begin position="135"/>
        <end position="213"/>
    </location>
</feature>
<feature type="binding site" evidence="1">
    <location>
        <position position="148"/>
    </location>
    <ligand>
        <name>Zn(2+)</name>
        <dbReference type="ChEBI" id="CHEBI:29105"/>
        <label>1</label>
    </ligand>
</feature>
<feature type="binding site" evidence="1">
    <location>
        <position position="151"/>
    </location>
    <ligand>
        <name>Zn(2+)</name>
        <dbReference type="ChEBI" id="CHEBI:29105"/>
        <label>1</label>
    </ligand>
</feature>
<feature type="binding site" evidence="1">
    <location>
        <position position="165"/>
    </location>
    <ligand>
        <name>Zn(2+)</name>
        <dbReference type="ChEBI" id="CHEBI:29105"/>
        <label>2</label>
    </ligand>
</feature>
<feature type="binding site" evidence="1">
    <location>
        <position position="168"/>
    </location>
    <ligand>
        <name>Zn(2+)</name>
        <dbReference type="ChEBI" id="CHEBI:29105"/>
        <label>2</label>
    </ligand>
</feature>
<feature type="binding site" evidence="1">
    <location>
        <position position="187"/>
    </location>
    <ligand>
        <name>Zn(2+)</name>
        <dbReference type="ChEBI" id="CHEBI:29105"/>
        <label>2</label>
    </ligand>
</feature>
<feature type="binding site" evidence="1">
    <location>
        <position position="190"/>
    </location>
    <ligand>
        <name>Zn(2+)</name>
        <dbReference type="ChEBI" id="CHEBI:29105"/>
        <label>2</label>
    </ligand>
</feature>
<feature type="binding site" evidence="1">
    <location>
        <position position="201"/>
    </location>
    <ligand>
        <name>Zn(2+)</name>
        <dbReference type="ChEBI" id="CHEBI:29105"/>
        <label>1</label>
    </ligand>
</feature>
<feature type="binding site" evidence="1">
    <location>
        <position position="204"/>
    </location>
    <ligand>
        <name>Zn(2+)</name>
        <dbReference type="ChEBI" id="CHEBI:29105"/>
        <label>1</label>
    </ligand>
</feature>
<comment type="function">
    <text evidence="1">Participates actively in the response to hyperosmotic and heat shock by preventing the aggregation of stress-denatured proteins and by disaggregating proteins, also in an autonomous, DnaK-independent fashion. Unfolded proteins bind initially to DnaJ; upon interaction with the DnaJ-bound protein, DnaK hydrolyzes its bound ATP, resulting in the formation of a stable complex. GrpE releases ADP from DnaK; ATP binding to DnaK triggers the release of the substrate protein, thus completing the reaction cycle. Several rounds of ATP-dependent interactions between DnaJ, DnaK and GrpE are required for fully efficient folding. Also involved, together with DnaK and GrpE, in the DNA replication of plasmids through activation of initiation proteins.</text>
</comment>
<comment type="cofactor">
    <cofactor evidence="1">
        <name>Zn(2+)</name>
        <dbReference type="ChEBI" id="CHEBI:29105"/>
    </cofactor>
    <text evidence="1">Binds 2 Zn(2+) ions per monomer.</text>
</comment>
<comment type="subunit">
    <text evidence="1">Homodimer.</text>
</comment>
<comment type="subcellular location">
    <subcellularLocation>
        <location evidence="1">Cytoplasm</location>
    </subcellularLocation>
</comment>
<comment type="domain">
    <text evidence="1">The J domain is necessary and sufficient to stimulate DnaK ATPase activity. Zinc center 1 plays an important role in the autonomous, DnaK-independent chaperone activity of DnaJ. Zinc center 2 is essential for interaction with DnaK and for DnaJ activity.</text>
</comment>
<comment type="similarity">
    <text evidence="1">Belongs to the DnaJ family.</text>
</comment>
<gene>
    <name evidence="1" type="primary">dnaJ</name>
    <name type="ordered locus">BSUIS_A1966</name>
</gene>
<organism>
    <name type="scientific">Brucella suis (strain ATCC 23445 / NCTC 10510)</name>
    <dbReference type="NCBI Taxonomy" id="470137"/>
    <lineage>
        <taxon>Bacteria</taxon>
        <taxon>Pseudomonadati</taxon>
        <taxon>Pseudomonadota</taxon>
        <taxon>Alphaproteobacteria</taxon>
        <taxon>Hyphomicrobiales</taxon>
        <taxon>Brucellaceae</taxon>
        <taxon>Brucella/Ochrobactrum group</taxon>
        <taxon>Brucella</taxon>
    </lineage>
</organism>
<dbReference type="EMBL" id="CP000911">
    <property type="protein sequence ID" value="ABY38976.1"/>
    <property type="molecule type" value="Genomic_DNA"/>
</dbReference>
<dbReference type="RefSeq" id="WP_004684564.1">
    <property type="nucleotide sequence ID" value="NC_010169.1"/>
</dbReference>
<dbReference type="SMR" id="B0CJX5"/>
<dbReference type="GeneID" id="55591692"/>
<dbReference type="KEGG" id="bmt:BSUIS_A1966"/>
<dbReference type="HOGENOM" id="CLU_017633_0_7_5"/>
<dbReference type="PRO" id="PR:B0CJX5"/>
<dbReference type="Proteomes" id="UP000008545">
    <property type="component" value="Chromosome I"/>
</dbReference>
<dbReference type="GO" id="GO:0005737">
    <property type="term" value="C:cytoplasm"/>
    <property type="evidence" value="ECO:0007669"/>
    <property type="project" value="UniProtKB-SubCell"/>
</dbReference>
<dbReference type="GO" id="GO:0005524">
    <property type="term" value="F:ATP binding"/>
    <property type="evidence" value="ECO:0007669"/>
    <property type="project" value="InterPro"/>
</dbReference>
<dbReference type="GO" id="GO:0031072">
    <property type="term" value="F:heat shock protein binding"/>
    <property type="evidence" value="ECO:0007669"/>
    <property type="project" value="InterPro"/>
</dbReference>
<dbReference type="GO" id="GO:0051082">
    <property type="term" value="F:unfolded protein binding"/>
    <property type="evidence" value="ECO:0007669"/>
    <property type="project" value="UniProtKB-UniRule"/>
</dbReference>
<dbReference type="GO" id="GO:0008270">
    <property type="term" value="F:zinc ion binding"/>
    <property type="evidence" value="ECO:0007669"/>
    <property type="project" value="UniProtKB-UniRule"/>
</dbReference>
<dbReference type="GO" id="GO:0051085">
    <property type="term" value="P:chaperone cofactor-dependent protein refolding"/>
    <property type="evidence" value="ECO:0007669"/>
    <property type="project" value="TreeGrafter"/>
</dbReference>
<dbReference type="GO" id="GO:0006260">
    <property type="term" value="P:DNA replication"/>
    <property type="evidence" value="ECO:0007669"/>
    <property type="project" value="UniProtKB-KW"/>
</dbReference>
<dbReference type="GO" id="GO:0042026">
    <property type="term" value="P:protein refolding"/>
    <property type="evidence" value="ECO:0007669"/>
    <property type="project" value="TreeGrafter"/>
</dbReference>
<dbReference type="GO" id="GO:0009408">
    <property type="term" value="P:response to heat"/>
    <property type="evidence" value="ECO:0007669"/>
    <property type="project" value="InterPro"/>
</dbReference>
<dbReference type="CDD" id="cd06257">
    <property type="entry name" value="DnaJ"/>
    <property type="match status" value="1"/>
</dbReference>
<dbReference type="CDD" id="cd10747">
    <property type="entry name" value="DnaJ_C"/>
    <property type="match status" value="1"/>
</dbReference>
<dbReference type="CDD" id="cd10719">
    <property type="entry name" value="DnaJ_zf"/>
    <property type="match status" value="1"/>
</dbReference>
<dbReference type="FunFam" id="1.10.287.110:FF:000034">
    <property type="entry name" value="Chaperone protein DnaJ"/>
    <property type="match status" value="1"/>
</dbReference>
<dbReference type="FunFam" id="2.10.230.10:FF:000002">
    <property type="entry name" value="Molecular chaperone DnaJ"/>
    <property type="match status" value="1"/>
</dbReference>
<dbReference type="FunFam" id="2.60.260.20:FF:000004">
    <property type="entry name" value="Molecular chaperone DnaJ"/>
    <property type="match status" value="1"/>
</dbReference>
<dbReference type="Gene3D" id="1.10.287.110">
    <property type="entry name" value="DnaJ domain"/>
    <property type="match status" value="1"/>
</dbReference>
<dbReference type="Gene3D" id="2.10.230.10">
    <property type="entry name" value="Heat shock protein DnaJ, cysteine-rich domain"/>
    <property type="match status" value="1"/>
</dbReference>
<dbReference type="Gene3D" id="2.60.260.20">
    <property type="entry name" value="Urease metallochaperone UreE, N-terminal domain"/>
    <property type="match status" value="2"/>
</dbReference>
<dbReference type="HAMAP" id="MF_01152">
    <property type="entry name" value="DnaJ"/>
    <property type="match status" value="1"/>
</dbReference>
<dbReference type="InterPro" id="IPR012724">
    <property type="entry name" value="DnaJ"/>
</dbReference>
<dbReference type="InterPro" id="IPR002939">
    <property type="entry name" value="DnaJ_C"/>
</dbReference>
<dbReference type="InterPro" id="IPR001623">
    <property type="entry name" value="DnaJ_domain"/>
</dbReference>
<dbReference type="InterPro" id="IPR018253">
    <property type="entry name" value="DnaJ_domain_CS"/>
</dbReference>
<dbReference type="InterPro" id="IPR008971">
    <property type="entry name" value="HSP40/DnaJ_pept-bd"/>
</dbReference>
<dbReference type="InterPro" id="IPR001305">
    <property type="entry name" value="HSP_DnaJ_Cys-rich_dom"/>
</dbReference>
<dbReference type="InterPro" id="IPR036410">
    <property type="entry name" value="HSP_DnaJ_Cys-rich_dom_sf"/>
</dbReference>
<dbReference type="InterPro" id="IPR036869">
    <property type="entry name" value="J_dom_sf"/>
</dbReference>
<dbReference type="NCBIfam" id="TIGR02349">
    <property type="entry name" value="DnaJ_bact"/>
    <property type="match status" value="1"/>
</dbReference>
<dbReference type="NCBIfam" id="NF008035">
    <property type="entry name" value="PRK10767.1"/>
    <property type="match status" value="1"/>
</dbReference>
<dbReference type="PANTHER" id="PTHR43096:SF48">
    <property type="entry name" value="CHAPERONE PROTEIN DNAJ"/>
    <property type="match status" value="1"/>
</dbReference>
<dbReference type="PANTHER" id="PTHR43096">
    <property type="entry name" value="DNAJ HOMOLOG 1, MITOCHONDRIAL-RELATED"/>
    <property type="match status" value="1"/>
</dbReference>
<dbReference type="Pfam" id="PF00226">
    <property type="entry name" value="DnaJ"/>
    <property type="match status" value="1"/>
</dbReference>
<dbReference type="Pfam" id="PF01556">
    <property type="entry name" value="DnaJ_C"/>
    <property type="match status" value="1"/>
</dbReference>
<dbReference type="Pfam" id="PF00684">
    <property type="entry name" value="DnaJ_CXXCXGXG"/>
    <property type="match status" value="1"/>
</dbReference>
<dbReference type="PRINTS" id="PR00625">
    <property type="entry name" value="JDOMAIN"/>
</dbReference>
<dbReference type="SMART" id="SM00271">
    <property type="entry name" value="DnaJ"/>
    <property type="match status" value="1"/>
</dbReference>
<dbReference type="SUPFAM" id="SSF46565">
    <property type="entry name" value="Chaperone J-domain"/>
    <property type="match status" value="1"/>
</dbReference>
<dbReference type="SUPFAM" id="SSF57938">
    <property type="entry name" value="DnaJ/Hsp40 cysteine-rich domain"/>
    <property type="match status" value="1"/>
</dbReference>
<dbReference type="SUPFAM" id="SSF49493">
    <property type="entry name" value="HSP40/DnaJ peptide-binding domain"/>
    <property type="match status" value="2"/>
</dbReference>
<dbReference type="PROSITE" id="PS00636">
    <property type="entry name" value="DNAJ_1"/>
    <property type="match status" value="1"/>
</dbReference>
<dbReference type="PROSITE" id="PS50076">
    <property type="entry name" value="DNAJ_2"/>
    <property type="match status" value="1"/>
</dbReference>
<dbReference type="PROSITE" id="PS51188">
    <property type="entry name" value="ZF_CR"/>
    <property type="match status" value="1"/>
</dbReference>
<accession>B0CJX5</accession>